<gene>
    <name type="primary">hb</name>
</gene>
<name>HUNB_CLOAL</name>
<proteinExistence type="evidence at transcript level"/>
<comment type="function">
    <text evidence="1">Gap class segmentation protein that controls development of head structures.</text>
</comment>
<comment type="subcellular location">
    <subcellularLocation>
        <location evidence="4">Nucleus</location>
    </subcellularLocation>
</comment>
<comment type="similarity">
    <text evidence="4">Belongs to the hunchback C2H2-type zinc-finger protein family.</text>
</comment>
<accession>O96785</accession>
<organism>
    <name type="scientific">Clogmia albipunctata</name>
    <name type="common">Mothmidge</name>
    <dbReference type="NCBI Taxonomy" id="85120"/>
    <lineage>
        <taxon>Eukaryota</taxon>
        <taxon>Metazoa</taxon>
        <taxon>Ecdysozoa</taxon>
        <taxon>Arthropoda</taxon>
        <taxon>Hexapoda</taxon>
        <taxon>Insecta</taxon>
        <taxon>Pterygota</taxon>
        <taxon>Neoptera</taxon>
        <taxon>Endopterygota</taxon>
        <taxon>Diptera</taxon>
        <taxon>Nematocera</taxon>
        <taxon>Psychodoidea</taxon>
        <taxon>Psychodidae</taxon>
        <taxon>Clogmia</taxon>
    </lineage>
</organism>
<evidence type="ECO:0000250" key="1"/>
<evidence type="ECO:0000255" key="2">
    <source>
        <dbReference type="PROSITE-ProRule" id="PRU00042"/>
    </source>
</evidence>
<evidence type="ECO:0000256" key="3">
    <source>
        <dbReference type="SAM" id="MobiDB-lite"/>
    </source>
</evidence>
<evidence type="ECO:0000305" key="4"/>
<feature type="chain" id="PRO_0000046972" description="Protein hunchback">
    <location>
        <begin position="1" status="less than"/>
        <end position="485"/>
    </location>
</feature>
<feature type="zinc finger region" description="C2H2-type 1" evidence="2">
    <location>
        <begin position="87"/>
        <end position="109"/>
    </location>
</feature>
<feature type="zinc finger region" description="C2H2-type 2" evidence="2">
    <location>
        <begin position="116"/>
        <end position="138"/>
    </location>
</feature>
<feature type="zinc finger region" description="C2H2-type 3" evidence="2">
    <location>
        <begin position="144"/>
        <end position="166"/>
    </location>
</feature>
<feature type="zinc finger region" description="C2H2-type 4" evidence="2">
    <location>
        <begin position="172"/>
        <end position="196"/>
    </location>
</feature>
<feature type="zinc finger region" description="C2H2-type 5" evidence="2">
    <location>
        <begin position="432"/>
        <end position="454"/>
    </location>
</feature>
<feature type="zinc finger region" description="C2H2-type 6" evidence="2">
    <location>
        <begin position="460"/>
        <end position="484"/>
    </location>
</feature>
<feature type="region of interest" description="Disordered" evidence="3">
    <location>
        <begin position="1"/>
        <end position="77"/>
    </location>
</feature>
<feature type="region of interest" description="Disordered" evidence="3">
    <location>
        <begin position="229"/>
        <end position="270"/>
    </location>
</feature>
<feature type="region of interest" description="Disordered" evidence="3">
    <location>
        <begin position="318"/>
        <end position="361"/>
    </location>
</feature>
<feature type="region of interest" description="Disordered" evidence="3">
    <location>
        <begin position="398"/>
        <end position="422"/>
    </location>
</feature>
<feature type="compositionally biased region" description="Polar residues" evidence="3">
    <location>
        <begin position="16"/>
        <end position="37"/>
    </location>
</feature>
<feature type="compositionally biased region" description="Acidic residues" evidence="3">
    <location>
        <begin position="59"/>
        <end position="72"/>
    </location>
</feature>
<feature type="compositionally biased region" description="Polar residues" evidence="3">
    <location>
        <begin position="257"/>
        <end position="270"/>
    </location>
</feature>
<feature type="compositionally biased region" description="Acidic residues" evidence="3">
    <location>
        <begin position="325"/>
        <end position="335"/>
    </location>
</feature>
<feature type="compositionally biased region" description="Polar residues" evidence="3">
    <location>
        <begin position="345"/>
        <end position="358"/>
    </location>
</feature>
<feature type="compositionally biased region" description="Low complexity" evidence="3">
    <location>
        <begin position="402"/>
        <end position="416"/>
    </location>
</feature>
<feature type="non-terminal residue">
    <location>
        <position position="1"/>
    </location>
</feature>
<protein>
    <recommendedName>
        <fullName>Protein hunchback</fullName>
    </recommendedName>
</protein>
<dbReference type="EMBL" id="AJ131041">
    <property type="protein sequence ID" value="CAA10281.1"/>
    <property type="molecule type" value="mRNA"/>
</dbReference>
<dbReference type="SMR" id="O96785"/>
<dbReference type="GO" id="GO:0005634">
    <property type="term" value="C:nucleus"/>
    <property type="evidence" value="ECO:0007669"/>
    <property type="project" value="UniProtKB-SubCell"/>
</dbReference>
<dbReference type="GO" id="GO:0003700">
    <property type="term" value="F:DNA-binding transcription factor activity"/>
    <property type="evidence" value="ECO:0007669"/>
    <property type="project" value="TreeGrafter"/>
</dbReference>
<dbReference type="GO" id="GO:0000978">
    <property type="term" value="F:RNA polymerase II cis-regulatory region sequence-specific DNA binding"/>
    <property type="evidence" value="ECO:0007669"/>
    <property type="project" value="TreeGrafter"/>
</dbReference>
<dbReference type="GO" id="GO:0008270">
    <property type="term" value="F:zinc ion binding"/>
    <property type="evidence" value="ECO:0007669"/>
    <property type="project" value="UniProtKB-KW"/>
</dbReference>
<dbReference type="GO" id="GO:0006357">
    <property type="term" value="P:regulation of transcription by RNA polymerase II"/>
    <property type="evidence" value="ECO:0007669"/>
    <property type="project" value="TreeGrafter"/>
</dbReference>
<dbReference type="GO" id="GO:0035282">
    <property type="term" value="P:segmentation"/>
    <property type="evidence" value="ECO:0007669"/>
    <property type="project" value="UniProtKB-KW"/>
</dbReference>
<dbReference type="FunFam" id="3.30.160.60:FF:001301">
    <property type="entry name" value="Blast:Protein hunchback"/>
    <property type="match status" value="1"/>
</dbReference>
<dbReference type="FunFam" id="3.30.160.60:FF:001482">
    <property type="entry name" value="Hunchback"/>
    <property type="match status" value="1"/>
</dbReference>
<dbReference type="Gene3D" id="3.30.160.60">
    <property type="entry name" value="Classic Zinc Finger"/>
    <property type="match status" value="3"/>
</dbReference>
<dbReference type="InterPro" id="IPR050589">
    <property type="entry name" value="Ikaros_C2H2-ZF"/>
</dbReference>
<dbReference type="InterPro" id="IPR036236">
    <property type="entry name" value="Znf_C2H2_sf"/>
</dbReference>
<dbReference type="InterPro" id="IPR013087">
    <property type="entry name" value="Znf_C2H2_type"/>
</dbReference>
<dbReference type="PANTHER" id="PTHR24404">
    <property type="entry name" value="ZINC FINGER PROTEIN"/>
    <property type="match status" value="1"/>
</dbReference>
<dbReference type="PANTHER" id="PTHR24404:SF55">
    <property type="entry name" value="ZINC FINGER PROTEIN PEGASUS"/>
    <property type="match status" value="1"/>
</dbReference>
<dbReference type="Pfam" id="PF00096">
    <property type="entry name" value="zf-C2H2"/>
    <property type="match status" value="2"/>
</dbReference>
<dbReference type="SMART" id="SM00355">
    <property type="entry name" value="ZnF_C2H2"/>
    <property type="match status" value="6"/>
</dbReference>
<dbReference type="SUPFAM" id="SSF57667">
    <property type="entry name" value="beta-beta-alpha zinc fingers"/>
    <property type="match status" value="3"/>
</dbReference>
<dbReference type="PROSITE" id="PS00028">
    <property type="entry name" value="ZINC_FINGER_C2H2_1"/>
    <property type="match status" value="3"/>
</dbReference>
<dbReference type="PROSITE" id="PS50157">
    <property type="entry name" value="ZINC_FINGER_C2H2_2"/>
    <property type="match status" value="3"/>
</dbReference>
<reference key="1">
    <citation type="journal article" date="1999" name="Dev. Genes Evol.">
        <title>Segmentation gene expression in the mothmidge Clogmia albipunctata (Diptera, psychodidae) and other primitive dipterans.</title>
        <authorList>
            <person name="Rohr K.B."/>
            <person name="Tautz D."/>
            <person name="Sander K."/>
        </authorList>
    </citation>
    <scope>NUCLEOTIDE SEQUENCE [MRNA]</scope>
</reference>
<sequence length="485" mass="55367">TSSTARKTPEKDSLKQDQNQLLKTPIQTNGNQQSTFDSGEDSHSMPDSDLLEPVITDGADVDDENDAEEDDDIRTPKINSHGKMKTYKCKQCDFIAVTKLSFWEHNRIHIKPEKMLKCQKCPFITEYKHHLEYHLRNHNGSKPFQCKQCNYSCVNKSMLNSHMKSHSNIYQYRCKDCNYATKYCHSLKLHLRKYSHNPPMVLNYDGTPNPLRIIDVYGTRRGPKVKFHKDEGGHNLLNSNINTSRRSKSGKRDSFPNFEQSQHVPTPPSSQALAMLPNLANIFQQSPSMPLFPYLNLNFHHILAQQKAALSQISPSINGWQNEENCNEEETPEKEEDPKRMSALDLSSNPSTPSTVSQVKHKRKGRAFKLELMKESSDDDEGQTIRTLGEIRSELETPKPVQLQLPTSSTTTPLKTTSEDDSTSVEPLQNLYECKFCDISFKHAVLYTIHMGYHGYNDVFKCNACGKKCEDRVAFFLHIARDAHA</sequence>
<keyword id="KW-0217">Developmental protein</keyword>
<keyword id="KW-0238">DNA-binding</keyword>
<keyword id="KW-0302">Gap protein</keyword>
<keyword id="KW-0479">Metal-binding</keyword>
<keyword id="KW-0539">Nucleus</keyword>
<keyword id="KW-0677">Repeat</keyword>
<keyword id="KW-0862">Zinc</keyword>
<keyword id="KW-0863">Zinc-finger</keyword>